<gene>
    <name evidence="1" type="primary">glnD</name>
    <name type="ordered locus">BAB1_0143</name>
</gene>
<proteinExistence type="inferred from homology"/>
<dbReference type="EC" id="2.7.7.59" evidence="1"/>
<dbReference type="EC" id="3.1.4.-" evidence="1"/>
<dbReference type="EMBL" id="AM040264">
    <property type="protein sequence ID" value="CAJ10099.1"/>
    <property type="molecule type" value="Genomic_DNA"/>
</dbReference>
<dbReference type="RefSeq" id="WP_002965392.1">
    <property type="nucleotide sequence ID" value="NZ_KN046823.1"/>
</dbReference>
<dbReference type="SMR" id="Q2YNZ1"/>
<dbReference type="STRING" id="359391.BAB1_0143"/>
<dbReference type="KEGG" id="bmf:BAB1_0143"/>
<dbReference type="PATRIC" id="fig|359391.11.peg.1566"/>
<dbReference type="HOGENOM" id="CLU_012833_1_0_5"/>
<dbReference type="PhylomeDB" id="Q2YNZ1"/>
<dbReference type="Proteomes" id="UP000002719">
    <property type="component" value="Chromosome I"/>
</dbReference>
<dbReference type="GO" id="GO:0008773">
    <property type="term" value="F:[protein-PII] uridylyltransferase activity"/>
    <property type="evidence" value="ECO:0007669"/>
    <property type="project" value="UniProtKB-UniRule"/>
</dbReference>
<dbReference type="GO" id="GO:0008081">
    <property type="term" value="F:phosphoric diester hydrolase activity"/>
    <property type="evidence" value="ECO:0007669"/>
    <property type="project" value="UniProtKB-UniRule"/>
</dbReference>
<dbReference type="GO" id="GO:0006808">
    <property type="term" value="P:regulation of nitrogen utilization"/>
    <property type="evidence" value="ECO:0007669"/>
    <property type="project" value="UniProtKB-UniRule"/>
</dbReference>
<dbReference type="CDD" id="cd04899">
    <property type="entry name" value="ACT_ACR-UUR-like_2"/>
    <property type="match status" value="1"/>
</dbReference>
<dbReference type="CDD" id="cd04900">
    <property type="entry name" value="ACT_UUR-like_1"/>
    <property type="match status" value="1"/>
</dbReference>
<dbReference type="CDD" id="cd00077">
    <property type="entry name" value="HDc"/>
    <property type="match status" value="1"/>
</dbReference>
<dbReference type="CDD" id="cd05401">
    <property type="entry name" value="NT_GlnE_GlnD_like"/>
    <property type="match status" value="1"/>
</dbReference>
<dbReference type="Gene3D" id="3.30.70.260">
    <property type="match status" value="1"/>
</dbReference>
<dbReference type="Gene3D" id="3.30.460.10">
    <property type="entry name" value="Beta Polymerase, domain 2"/>
    <property type="match status" value="1"/>
</dbReference>
<dbReference type="Gene3D" id="1.10.3090.10">
    <property type="entry name" value="cca-adding enzyme, domain 2"/>
    <property type="match status" value="1"/>
</dbReference>
<dbReference type="HAMAP" id="MF_00277">
    <property type="entry name" value="PII_uridylyl_transf"/>
    <property type="match status" value="1"/>
</dbReference>
<dbReference type="InterPro" id="IPR045865">
    <property type="entry name" value="ACT-like_dom_sf"/>
</dbReference>
<dbReference type="InterPro" id="IPR002912">
    <property type="entry name" value="ACT_dom"/>
</dbReference>
<dbReference type="InterPro" id="IPR003607">
    <property type="entry name" value="HD/PDEase_dom"/>
</dbReference>
<dbReference type="InterPro" id="IPR006674">
    <property type="entry name" value="HD_domain"/>
</dbReference>
<dbReference type="InterPro" id="IPR043519">
    <property type="entry name" value="NT_sf"/>
</dbReference>
<dbReference type="InterPro" id="IPR013546">
    <property type="entry name" value="PII_UdlTrfase/GS_AdlTrfase"/>
</dbReference>
<dbReference type="InterPro" id="IPR010043">
    <property type="entry name" value="UTase/UR"/>
</dbReference>
<dbReference type="NCBIfam" id="NF003467">
    <property type="entry name" value="PRK05092.1"/>
    <property type="match status" value="1"/>
</dbReference>
<dbReference type="NCBIfam" id="TIGR01693">
    <property type="entry name" value="UTase_glnD"/>
    <property type="match status" value="1"/>
</dbReference>
<dbReference type="PANTHER" id="PTHR47320">
    <property type="entry name" value="BIFUNCTIONAL URIDYLYLTRANSFERASE/URIDYLYL-REMOVING ENZYME"/>
    <property type="match status" value="1"/>
</dbReference>
<dbReference type="PANTHER" id="PTHR47320:SF1">
    <property type="entry name" value="BIFUNCTIONAL URIDYLYLTRANSFERASE_URIDYLYL-REMOVING ENZYME"/>
    <property type="match status" value="1"/>
</dbReference>
<dbReference type="Pfam" id="PF01842">
    <property type="entry name" value="ACT"/>
    <property type="match status" value="2"/>
</dbReference>
<dbReference type="Pfam" id="PF08335">
    <property type="entry name" value="GlnD_UR_UTase"/>
    <property type="match status" value="1"/>
</dbReference>
<dbReference type="Pfam" id="PF01966">
    <property type="entry name" value="HD"/>
    <property type="match status" value="1"/>
</dbReference>
<dbReference type="PIRSF" id="PIRSF006288">
    <property type="entry name" value="PII_uridyltransf"/>
    <property type="match status" value="1"/>
</dbReference>
<dbReference type="SMART" id="SM00471">
    <property type="entry name" value="HDc"/>
    <property type="match status" value="1"/>
</dbReference>
<dbReference type="SUPFAM" id="SSF55021">
    <property type="entry name" value="ACT-like"/>
    <property type="match status" value="2"/>
</dbReference>
<dbReference type="SUPFAM" id="SSF81301">
    <property type="entry name" value="Nucleotidyltransferase"/>
    <property type="match status" value="1"/>
</dbReference>
<dbReference type="SUPFAM" id="SSF81593">
    <property type="entry name" value="Nucleotidyltransferase substrate binding subunit/domain"/>
    <property type="match status" value="1"/>
</dbReference>
<dbReference type="SUPFAM" id="SSF81891">
    <property type="entry name" value="Poly A polymerase C-terminal region-like"/>
    <property type="match status" value="1"/>
</dbReference>
<dbReference type="PROSITE" id="PS51671">
    <property type="entry name" value="ACT"/>
    <property type="match status" value="2"/>
</dbReference>
<dbReference type="PROSITE" id="PS51831">
    <property type="entry name" value="HD"/>
    <property type="match status" value="1"/>
</dbReference>
<keyword id="KW-0378">Hydrolase</keyword>
<keyword id="KW-0460">Magnesium</keyword>
<keyword id="KW-0511">Multifunctional enzyme</keyword>
<keyword id="KW-0548">Nucleotidyltransferase</keyword>
<keyword id="KW-1185">Reference proteome</keyword>
<keyword id="KW-0677">Repeat</keyword>
<keyword id="KW-0808">Transferase</keyword>
<name>GLND_BRUA2</name>
<comment type="function">
    <text evidence="1">Modifies, by uridylylation and deuridylylation, the PII regulatory proteins (GlnB and homologs), in response to the nitrogen status of the cell that GlnD senses through the glutamine level. Under low glutamine levels, catalyzes the conversion of the PII proteins and UTP to PII-UMP and PPi, while under higher glutamine levels, GlnD hydrolyzes PII-UMP to PII and UMP (deuridylylation). Thus, controls uridylylation state and activity of the PII proteins, and plays an important role in the regulation of nitrogen assimilation and metabolism.</text>
</comment>
<comment type="catalytic activity">
    <reaction evidence="1">
        <text>[protein-PII]-L-tyrosine + UTP = [protein-PII]-uridylyl-L-tyrosine + diphosphate</text>
        <dbReference type="Rhea" id="RHEA:13673"/>
        <dbReference type="Rhea" id="RHEA-COMP:12147"/>
        <dbReference type="Rhea" id="RHEA-COMP:12148"/>
        <dbReference type="ChEBI" id="CHEBI:33019"/>
        <dbReference type="ChEBI" id="CHEBI:46398"/>
        <dbReference type="ChEBI" id="CHEBI:46858"/>
        <dbReference type="ChEBI" id="CHEBI:90602"/>
        <dbReference type="EC" id="2.7.7.59"/>
    </reaction>
</comment>
<comment type="catalytic activity">
    <reaction evidence="1">
        <text>[protein-PII]-uridylyl-L-tyrosine + H2O = [protein-PII]-L-tyrosine + UMP + H(+)</text>
        <dbReference type="Rhea" id="RHEA:48600"/>
        <dbReference type="Rhea" id="RHEA-COMP:12147"/>
        <dbReference type="Rhea" id="RHEA-COMP:12148"/>
        <dbReference type="ChEBI" id="CHEBI:15377"/>
        <dbReference type="ChEBI" id="CHEBI:15378"/>
        <dbReference type="ChEBI" id="CHEBI:46858"/>
        <dbReference type="ChEBI" id="CHEBI:57865"/>
        <dbReference type="ChEBI" id="CHEBI:90602"/>
    </reaction>
</comment>
<comment type="cofactor">
    <cofactor evidence="1">
        <name>Mg(2+)</name>
        <dbReference type="ChEBI" id="CHEBI:18420"/>
    </cofactor>
</comment>
<comment type="activity regulation">
    <text evidence="1">Uridylyltransferase (UTase) activity is inhibited by glutamine, while glutamine activates uridylyl-removing (UR) activity.</text>
</comment>
<comment type="domain">
    <text evidence="1">Has four distinct domains: an N-terminal nucleotidyltransferase (NT) domain responsible for UTase activity, a central HD domain that encodes UR activity, and two C-terminal ACT domains that seem to have a role in glutamine sensing.</text>
</comment>
<comment type="similarity">
    <text evidence="1">Belongs to the GlnD family.</text>
</comment>
<protein>
    <recommendedName>
        <fullName evidence="1">Bifunctional uridylyltransferase/uridylyl-removing enzyme</fullName>
        <shortName evidence="1">UTase/UR</shortName>
    </recommendedName>
    <alternativeName>
        <fullName evidence="1">Bifunctional [protein-PII] modification enzyme</fullName>
    </alternativeName>
    <alternativeName>
        <fullName evidence="1">Bifunctional nitrogen sensor protein</fullName>
    </alternativeName>
    <domain>
        <recommendedName>
            <fullName evidence="1">[Protein-PII] uridylyltransferase</fullName>
            <shortName evidence="1">PII uridylyltransferase</shortName>
            <shortName evidence="1">UTase</shortName>
            <ecNumber evidence="1">2.7.7.59</ecNumber>
        </recommendedName>
    </domain>
    <domain>
        <recommendedName>
            <fullName evidence="1">[Protein-PII]-UMP uridylyl-removing enzyme</fullName>
            <shortName evidence="1">UR</shortName>
            <ecNumber evidence="1">3.1.4.-</ecNumber>
        </recommendedName>
    </domain>
</protein>
<feature type="chain" id="PRO_0000231678" description="Bifunctional uridylyltransferase/uridylyl-removing enzyme">
    <location>
        <begin position="1"/>
        <end position="934"/>
    </location>
</feature>
<feature type="domain" description="HD" evidence="2">
    <location>
        <begin position="496"/>
        <end position="613"/>
    </location>
</feature>
<feature type="domain" description="ACT 1" evidence="1">
    <location>
        <begin position="737"/>
        <end position="818"/>
    </location>
</feature>
<feature type="domain" description="ACT 2" evidence="1">
    <location>
        <begin position="848"/>
        <end position="931"/>
    </location>
</feature>
<feature type="region of interest" description="Uridylyltransferase">
    <location>
        <begin position="1"/>
        <end position="379"/>
    </location>
</feature>
<feature type="region of interest" description="Uridylyl-removing">
    <location>
        <begin position="380"/>
        <end position="736"/>
    </location>
</feature>
<evidence type="ECO:0000255" key="1">
    <source>
        <dbReference type="HAMAP-Rule" id="MF_00277"/>
    </source>
</evidence>
<evidence type="ECO:0000255" key="2">
    <source>
        <dbReference type="PROSITE-ProRule" id="PRU01175"/>
    </source>
</evidence>
<reference key="1">
    <citation type="journal article" date="2005" name="Infect. Immun.">
        <title>Whole-genome analyses of speciation events in pathogenic Brucellae.</title>
        <authorList>
            <person name="Chain P.S."/>
            <person name="Comerci D.J."/>
            <person name="Tolmasky M.E."/>
            <person name="Larimer F.W."/>
            <person name="Malfatti S.A."/>
            <person name="Vergez L.M."/>
            <person name="Aguero F."/>
            <person name="Land M.L."/>
            <person name="Ugalde R.A."/>
            <person name="Garcia E."/>
        </authorList>
    </citation>
    <scope>NUCLEOTIDE SEQUENCE [LARGE SCALE GENOMIC DNA]</scope>
    <source>
        <strain>2308</strain>
    </source>
</reference>
<accession>Q2YNZ1</accession>
<organism>
    <name type="scientific">Brucella abortus (strain 2308)</name>
    <dbReference type="NCBI Taxonomy" id="359391"/>
    <lineage>
        <taxon>Bacteria</taxon>
        <taxon>Pseudomonadati</taxon>
        <taxon>Pseudomonadota</taxon>
        <taxon>Alphaproteobacteria</taxon>
        <taxon>Hyphomicrobiales</taxon>
        <taxon>Brucellaceae</taxon>
        <taxon>Brucella/Ochrobactrum group</taxon>
        <taxon>Brucella</taxon>
    </lineage>
</organism>
<sequence length="934" mass="105930">MSAHDLKLEEIVNAETLRRKLNELADTADESYTSLPMRKVVLQTLKDALASGRANAEDMLMKDGGGTLCAKRLCYLMDTLIDILFEFATTRAYPTRNPSKAENMALVAVGGYGRGGLAQGSDIDLLFLLPYKQTPWGEQVVEYTLYMLWDMGLKVGHSTRNIDECIRLAREDMTIRTALLDARFLTGDKDLFRTLEIRFEEEIVKGTEPEFIQAKLAERDARHRKAGETRYLVEPNVKEGKGGQRDLHTLFWITKYFYRVKTKEELVKLGVLSRAELKLFNKAEDFLWAVRCHMHFATLKAEERLSFDIQPEIAQRLGYTAHPGQNYVERFMKHYFLVAKDVGDLTRIICAALEEQQAKHVPGFNRIFLTFSRRKRKLSDDGAFISENHRINIARPDIFRQDPVNMIRLFHLADRHGLEFHPEAMQSLTRSLKLINADLRENPEANRLFLEILTSPRNPELILRRMNESGVLGKFIPDFGKIVAMMQFNMYHHYTVDEHLLRCIAVLSEIEHGELKTEHPLSNHLITTIKRDRNLLYVTLLLHDIAKGRPEDHSIAGARIARRLCPRFGLTPSETETVEWLVREHLTMSMVAQSRDLNDRKTIIDFADTVQTMERLKLLLILTVCDIKAVGPGIWNGWKGQLLRTLFYETELVLTGGFSELSRAARDKQAREALAERLSDWPKEERDAYLALPYTNYFLTVSLDDQVRHAHFIRDADQQGRALVTMAKPHAFEAVTEITVLAPDHPRLLSVITGACAAAGGNIVDAQIFTTSDGRALDTILISREFDTDDDERRRAERVGKVIEDVLSGKAHLPDMLAKRTKPKKAARAFKVEPRVEINNTLSNKFTVIEVEGLDRPGLLSELTGLISDLSLDIASAHITTFGEKVIDSFYVTDLVGHKISNATRQGNIKRKLLALLGAENGARTNGRSPQAAA</sequence>